<organism>
    <name type="scientific">Aliivibrio fischeri (strain ATCC 700601 / ES114)</name>
    <name type="common">Vibrio fischeri</name>
    <dbReference type="NCBI Taxonomy" id="312309"/>
    <lineage>
        <taxon>Bacteria</taxon>
        <taxon>Pseudomonadati</taxon>
        <taxon>Pseudomonadota</taxon>
        <taxon>Gammaproteobacteria</taxon>
        <taxon>Vibrionales</taxon>
        <taxon>Vibrionaceae</taxon>
        <taxon>Aliivibrio</taxon>
    </lineage>
</organism>
<dbReference type="EMBL" id="CP000020">
    <property type="protein sequence ID" value="AAW86365.1"/>
    <property type="molecule type" value="Genomic_DNA"/>
</dbReference>
<dbReference type="RefSeq" id="WP_011262372.1">
    <property type="nucleotide sequence ID" value="NZ_CAWLES010000001.1"/>
</dbReference>
<dbReference type="RefSeq" id="YP_205253.1">
    <property type="nucleotide sequence ID" value="NC_006840.2"/>
</dbReference>
<dbReference type="SMR" id="Q5E3N1"/>
<dbReference type="STRING" id="312309.VF_1870"/>
<dbReference type="EnsemblBacteria" id="AAW86365">
    <property type="protein sequence ID" value="AAW86365"/>
    <property type="gene ID" value="VF_1870"/>
</dbReference>
<dbReference type="GeneID" id="54164568"/>
<dbReference type="KEGG" id="vfi:VF_1870"/>
<dbReference type="PATRIC" id="fig|312309.11.peg.1897"/>
<dbReference type="eggNOG" id="COG1706">
    <property type="taxonomic scope" value="Bacteria"/>
</dbReference>
<dbReference type="HOGENOM" id="CLU_045235_1_0_6"/>
<dbReference type="OrthoDB" id="9786431at2"/>
<dbReference type="Proteomes" id="UP000000537">
    <property type="component" value="Chromosome I"/>
</dbReference>
<dbReference type="GO" id="GO:0009428">
    <property type="term" value="C:bacterial-type flagellum basal body, distal rod, P ring"/>
    <property type="evidence" value="ECO:0007669"/>
    <property type="project" value="InterPro"/>
</dbReference>
<dbReference type="GO" id="GO:0030288">
    <property type="term" value="C:outer membrane-bounded periplasmic space"/>
    <property type="evidence" value="ECO:0007669"/>
    <property type="project" value="InterPro"/>
</dbReference>
<dbReference type="GO" id="GO:0005198">
    <property type="term" value="F:structural molecule activity"/>
    <property type="evidence" value="ECO:0007669"/>
    <property type="project" value="InterPro"/>
</dbReference>
<dbReference type="GO" id="GO:0071973">
    <property type="term" value="P:bacterial-type flagellum-dependent cell motility"/>
    <property type="evidence" value="ECO:0007669"/>
    <property type="project" value="InterPro"/>
</dbReference>
<dbReference type="HAMAP" id="MF_00416">
    <property type="entry name" value="FlgI"/>
    <property type="match status" value="1"/>
</dbReference>
<dbReference type="InterPro" id="IPR001782">
    <property type="entry name" value="Flag_FlgI"/>
</dbReference>
<dbReference type="NCBIfam" id="NF003676">
    <property type="entry name" value="PRK05303.1"/>
    <property type="match status" value="1"/>
</dbReference>
<dbReference type="PANTHER" id="PTHR30381">
    <property type="entry name" value="FLAGELLAR P-RING PERIPLASMIC PROTEIN FLGI"/>
    <property type="match status" value="1"/>
</dbReference>
<dbReference type="PANTHER" id="PTHR30381:SF0">
    <property type="entry name" value="FLAGELLAR P-RING PROTEIN"/>
    <property type="match status" value="1"/>
</dbReference>
<dbReference type="Pfam" id="PF02119">
    <property type="entry name" value="FlgI"/>
    <property type="match status" value="1"/>
</dbReference>
<dbReference type="PRINTS" id="PR01010">
    <property type="entry name" value="FLGPRINGFLGI"/>
</dbReference>
<name>FLGI_ALIF1</name>
<evidence type="ECO:0000255" key="1">
    <source>
        <dbReference type="HAMAP-Rule" id="MF_00416"/>
    </source>
</evidence>
<proteinExistence type="inferred from homology"/>
<sequence>MTNRWSFDVNKNLVTVLFTWLCLSISTAHAARIKDVAEVAGVRSNQLIGYGLVSGLPGTGESTPFTDQSFNAMLQNFGIQLPPGTKPKTKNVAAVMVTATLPPFSKQGQVVDVTVSSVGSAKSLRGGTLLQTFLKGLDGKTYAIAQGNLIVSGFSATGADGSKIVGNNPTVGRISGGAMVEREVPSPFGRGDFITFNLLESDFTTAQRMADAVNNFLGPNMASAVDATSVRVRAPRDISQRVAFLSAVENVDFDPADGSAKIIVNSRTGTIVVGKHVKLKPAAVTHGGMTVAIKENLQVSQPGPFSDGQTVVTPDSDIEVTEEQGKMFKFEPGLTLDDLVRAVNEVGAAPSDLMAILQALKQAGAIEGQLIII</sequence>
<feature type="signal peptide" evidence="1">
    <location>
        <begin position="1"/>
        <end position="30"/>
    </location>
</feature>
<feature type="chain" id="PRO_0000041805" description="Flagellar P-ring protein">
    <location>
        <begin position="31"/>
        <end position="373"/>
    </location>
</feature>
<keyword id="KW-0975">Bacterial flagellum</keyword>
<keyword id="KW-0574">Periplasm</keyword>
<keyword id="KW-1185">Reference proteome</keyword>
<keyword id="KW-0732">Signal</keyword>
<protein>
    <recommendedName>
        <fullName evidence="1">Flagellar P-ring protein</fullName>
    </recommendedName>
    <alternativeName>
        <fullName evidence="1">Basal body P-ring protein</fullName>
    </alternativeName>
</protein>
<gene>
    <name evidence="1" type="primary">flgI</name>
    <name type="ordered locus">VF_1870</name>
</gene>
<reference key="1">
    <citation type="journal article" date="2005" name="Proc. Natl. Acad. Sci. U.S.A.">
        <title>Complete genome sequence of Vibrio fischeri: a symbiotic bacterium with pathogenic congeners.</title>
        <authorList>
            <person name="Ruby E.G."/>
            <person name="Urbanowski M."/>
            <person name="Campbell J."/>
            <person name="Dunn A."/>
            <person name="Faini M."/>
            <person name="Gunsalus R."/>
            <person name="Lostroh P."/>
            <person name="Lupp C."/>
            <person name="McCann J."/>
            <person name="Millikan D."/>
            <person name="Schaefer A."/>
            <person name="Stabb E."/>
            <person name="Stevens A."/>
            <person name="Visick K."/>
            <person name="Whistler C."/>
            <person name="Greenberg E.P."/>
        </authorList>
    </citation>
    <scope>NUCLEOTIDE SEQUENCE [LARGE SCALE GENOMIC DNA]</scope>
    <source>
        <strain>ATCC 700601 / ES114</strain>
    </source>
</reference>
<comment type="function">
    <text evidence="1">Assembles around the rod to form the L-ring and probably protects the motor/basal body from shearing forces during rotation.</text>
</comment>
<comment type="subunit">
    <text evidence="1">The basal body constitutes a major portion of the flagellar organelle and consists of four rings (L,P,S, and M) mounted on a central rod.</text>
</comment>
<comment type="subcellular location">
    <subcellularLocation>
        <location evidence="1">Periplasm</location>
    </subcellularLocation>
    <subcellularLocation>
        <location evidence="1">Bacterial flagellum basal body</location>
    </subcellularLocation>
</comment>
<comment type="similarity">
    <text evidence="1">Belongs to the FlgI family.</text>
</comment>
<accession>Q5E3N1</accession>